<accession>Q2S2L3</accession>
<organism>
    <name type="scientific">Salinibacter ruber (strain DSM 13855 / M31)</name>
    <dbReference type="NCBI Taxonomy" id="309807"/>
    <lineage>
        <taxon>Bacteria</taxon>
        <taxon>Pseudomonadati</taxon>
        <taxon>Rhodothermota</taxon>
        <taxon>Rhodothermia</taxon>
        <taxon>Rhodothermales</taxon>
        <taxon>Salinibacteraceae</taxon>
        <taxon>Salinibacter</taxon>
    </lineage>
</organism>
<proteinExistence type="inferred from homology"/>
<keyword id="KW-0997">Cell inner membrane</keyword>
<keyword id="KW-1003">Cell membrane</keyword>
<keyword id="KW-0472">Membrane</keyword>
<keyword id="KW-0520">NAD</keyword>
<keyword id="KW-0874">Quinone</keyword>
<keyword id="KW-1185">Reference proteome</keyword>
<keyword id="KW-1278">Translocase</keyword>
<keyword id="KW-0812">Transmembrane</keyword>
<keyword id="KW-1133">Transmembrane helix</keyword>
<keyword id="KW-0813">Transport</keyword>
<evidence type="ECO:0000255" key="1">
    <source>
        <dbReference type="HAMAP-Rule" id="MF_01456"/>
    </source>
</evidence>
<sequence length="101" mass="10875">MDVAPNWYLALSAVLFTIGTFGVLFRRNAIVVLMSVELMLNAVNLTLVTFSQSMGDPSGQLLVFFSIAVAAAEAAVGLAIVIAIFRSQVTVDITEINLFKH</sequence>
<name>NUOK_SALRD</name>
<gene>
    <name evidence="1" type="primary">nuoK</name>
    <name type="ordered locus">SRU_1444</name>
</gene>
<protein>
    <recommendedName>
        <fullName evidence="1">NADH-quinone oxidoreductase subunit K</fullName>
        <ecNumber evidence="1">7.1.1.-</ecNumber>
    </recommendedName>
    <alternativeName>
        <fullName evidence="1">NADH dehydrogenase I subunit K</fullName>
    </alternativeName>
    <alternativeName>
        <fullName evidence="1">NDH-1 subunit K</fullName>
    </alternativeName>
</protein>
<comment type="function">
    <text evidence="1">NDH-1 shuttles electrons from NADH, via FMN and iron-sulfur (Fe-S) centers, to quinones in the respiratory chain. The immediate electron acceptor for the enzyme in this species is believed to be a menaquinone. Couples the redox reaction to proton translocation (for every two electrons transferred, four hydrogen ions are translocated across the cytoplasmic membrane), and thus conserves the redox energy in a proton gradient.</text>
</comment>
<comment type="catalytic activity">
    <reaction evidence="1">
        <text>a quinone + NADH + 5 H(+)(in) = a quinol + NAD(+) + 4 H(+)(out)</text>
        <dbReference type="Rhea" id="RHEA:57888"/>
        <dbReference type="ChEBI" id="CHEBI:15378"/>
        <dbReference type="ChEBI" id="CHEBI:24646"/>
        <dbReference type="ChEBI" id="CHEBI:57540"/>
        <dbReference type="ChEBI" id="CHEBI:57945"/>
        <dbReference type="ChEBI" id="CHEBI:132124"/>
    </reaction>
</comment>
<comment type="subunit">
    <text evidence="1">NDH-1 is composed of 14 different subunits. Subunits NuoA, H, J, K, L, M, N constitute the membrane sector of the complex.</text>
</comment>
<comment type="subcellular location">
    <subcellularLocation>
        <location evidence="1">Cell inner membrane</location>
        <topology evidence="1">Multi-pass membrane protein</topology>
    </subcellularLocation>
</comment>
<comment type="similarity">
    <text evidence="1">Belongs to the complex I subunit 4L family.</text>
</comment>
<feature type="chain" id="PRO_0000390216" description="NADH-quinone oxidoreductase subunit K">
    <location>
        <begin position="1"/>
        <end position="101"/>
    </location>
</feature>
<feature type="transmembrane region" description="Helical" evidence="1">
    <location>
        <begin position="5"/>
        <end position="25"/>
    </location>
</feature>
<feature type="transmembrane region" description="Helical" evidence="1">
    <location>
        <begin position="30"/>
        <end position="50"/>
    </location>
</feature>
<feature type="transmembrane region" description="Helical" evidence="1">
    <location>
        <begin position="62"/>
        <end position="82"/>
    </location>
</feature>
<reference key="1">
    <citation type="journal article" date="2005" name="Proc. Natl. Acad. Sci. U.S.A.">
        <title>The genome of Salinibacter ruber: convergence and gene exchange among hyperhalophilic bacteria and archaea.</title>
        <authorList>
            <person name="Mongodin E.F."/>
            <person name="Nelson K.E."/>
            <person name="Daugherty S."/>
            <person name="DeBoy R.T."/>
            <person name="Wister J."/>
            <person name="Khouri H."/>
            <person name="Weidman J."/>
            <person name="Walsh D.A."/>
            <person name="Papke R.T."/>
            <person name="Sanchez Perez G."/>
            <person name="Sharma A.K."/>
            <person name="Nesbo C.L."/>
            <person name="MacLeod D."/>
            <person name="Bapteste E."/>
            <person name="Doolittle W.F."/>
            <person name="Charlebois R.L."/>
            <person name="Legault B."/>
            <person name="Rodriguez-Valera F."/>
        </authorList>
    </citation>
    <scope>NUCLEOTIDE SEQUENCE [LARGE SCALE GENOMIC DNA]</scope>
    <source>
        <strain>DSM 13855 / CECT 5946 / M31</strain>
    </source>
</reference>
<dbReference type="EC" id="7.1.1.-" evidence="1"/>
<dbReference type="EMBL" id="CP000159">
    <property type="protein sequence ID" value="ABC45401.1"/>
    <property type="molecule type" value="Genomic_DNA"/>
</dbReference>
<dbReference type="RefSeq" id="WP_011404194.1">
    <property type="nucleotide sequence ID" value="NC_007677.1"/>
</dbReference>
<dbReference type="RefSeq" id="YP_445568.1">
    <property type="nucleotide sequence ID" value="NC_007677.1"/>
</dbReference>
<dbReference type="SMR" id="Q2S2L3"/>
<dbReference type="STRING" id="309807.SRU_1444"/>
<dbReference type="EnsemblBacteria" id="ABC45401">
    <property type="protein sequence ID" value="ABC45401"/>
    <property type="gene ID" value="SRU_1444"/>
</dbReference>
<dbReference type="GeneID" id="83728355"/>
<dbReference type="KEGG" id="sru:SRU_1444"/>
<dbReference type="PATRIC" id="fig|309807.25.peg.1499"/>
<dbReference type="eggNOG" id="COG0713">
    <property type="taxonomic scope" value="Bacteria"/>
</dbReference>
<dbReference type="HOGENOM" id="CLU_144724_0_0_10"/>
<dbReference type="OrthoDB" id="9810120at2"/>
<dbReference type="Proteomes" id="UP000008674">
    <property type="component" value="Chromosome"/>
</dbReference>
<dbReference type="GO" id="GO:0030964">
    <property type="term" value="C:NADH dehydrogenase complex"/>
    <property type="evidence" value="ECO:0007669"/>
    <property type="project" value="TreeGrafter"/>
</dbReference>
<dbReference type="GO" id="GO:0005886">
    <property type="term" value="C:plasma membrane"/>
    <property type="evidence" value="ECO:0007669"/>
    <property type="project" value="UniProtKB-SubCell"/>
</dbReference>
<dbReference type="GO" id="GO:0050136">
    <property type="term" value="F:NADH:ubiquinone reductase (non-electrogenic) activity"/>
    <property type="evidence" value="ECO:0007669"/>
    <property type="project" value="UniProtKB-UniRule"/>
</dbReference>
<dbReference type="GO" id="GO:0048038">
    <property type="term" value="F:quinone binding"/>
    <property type="evidence" value="ECO:0007669"/>
    <property type="project" value="UniProtKB-KW"/>
</dbReference>
<dbReference type="GO" id="GO:0042773">
    <property type="term" value="P:ATP synthesis coupled electron transport"/>
    <property type="evidence" value="ECO:0007669"/>
    <property type="project" value="InterPro"/>
</dbReference>
<dbReference type="FunFam" id="1.10.287.3510:FF:000001">
    <property type="entry name" value="NADH-quinone oxidoreductase subunit K"/>
    <property type="match status" value="1"/>
</dbReference>
<dbReference type="Gene3D" id="1.10.287.3510">
    <property type="match status" value="1"/>
</dbReference>
<dbReference type="HAMAP" id="MF_01456">
    <property type="entry name" value="NDH1_NuoK"/>
    <property type="match status" value="1"/>
</dbReference>
<dbReference type="InterPro" id="IPR001133">
    <property type="entry name" value="NADH_UbQ_OxRdtase_chain4L/K"/>
</dbReference>
<dbReference type="InterPro" id="IPR039428">
    <property type="entry name" value="NUOK/Mnh_C1-like"/>
</dbReference>
<dbReference type="NCBIfam" id="NF004320">
    <property type="entry name" value="PRK05715.1-2"/>
    <property type="match status" value="1"/>
</dbReference>
<dbReference type="NCBIfam" id="NF004321">
    <property type="entry name" value="PRK05715.1-3"/>
    <property type="match status" value="1"/>
</dbReference>
<dbReference type="NCBIfam" id="NF004323">
    <property type="entry name" value="PRK05715.1-5"/>
    <property type="match status" value="1"/>
</dbReference>
<dbReference type="PANTHER" id="PTHR11434:SF21">
    <property type="entry name" value="NADH DEHYDROGENASE SUBUNIT 4L-RELATED"/>
    <property type="match status" value="1"/>
</dbReference>
<dbReference type="PANTHER" id="PTHR11434">
    <property type="entry name" value="NADH-UBIQUINONE OXIDOREDUCTASE SUBUNIT ND4L"/>
    <property type="match status" value="1"/>
</dbReference>
<dbReference type="Pfam" id="PF00420">
    <property type="entry name" value="Oxidored_q2"/>
    <property type="match status" value="1"/>
</dbReference>